<comment type="function">
    <text evidence="1">Involved in the anomeric conversion of L-fucose.</text>
</comment>
<comment type="catalytic activity">
    <reaction evidence="1">
        <text>alpha-L-fucose = beta-L-fucose</text>
        <dbReference type="Rhea" id="RHEA:25580"/>
        <dbReference type="ChEBI" id="CHEBI:42548"/>
        <dbReference type="ChEBI" id="CHEBI:42589"/>
        <dbReference type="EC" id="5.1.3.29"/>
    </reaction>
</comment>
<comment type="pathway">
    <text evidence="1">Carbohydrate metabolism; L-fucose metabolism.</text>
</comment>
<comment type="subunit">
    <text evidence="1">Homodecamer.</text>
</comment>
<comment type="subcellular location">
    <subcellularLocation>
        <location evidence="1">Cytoplasm</location>
    </subcellularLocation>
</comment>
<comment type="similarity">
    <text evidence="1">Belongs to the RbsD / FucU family. FucU mutarotase subfamily.</text>
</comment>
<protein>
    <recommendedName>
        <fullName evidence="1">L-fucose mutarotase</fullName>
        <ecNumber evidence="1">5.1.3.29</ecNumber>
    </recommendedName>
    <alternativeName>
        <fullName evidence="1">Fucose 1-epimerase</fullName>
    </alternativeName>
    <alternativeName>
        <fullName evidence="1">Type-2 mutarotase</fullName>
    </alternativeName>
</protein>
<organism>
    <name type="scientific">Escherichia coli O1:K1 / APEC</name>
    <dbReference type="NCBI Taxonomy" id="405955"/>
    <lineage>
        <taxon>Bacteria</taxon>
        <taxon>Pseudomonadati</taxon>
        <taxon>Pseudomonadota</taxon>
        <taxon>Gammaproteobacteria</taxon>
        <taxon>Enterobacterales</taxon>
        <taxon>Enterobacteriaceae</taxon>
        <taxon>Escherichia</taxon>
    </lineage>
</organism>
<keyword id="KW-0119">Carbohydrate metabolism</keyword>
<keyword id="KW-0963">Cytoplasm</keyword>
<keyword id="KW-0294">Fucose metabolism</keyword>
<keyword id="KW-0413">Isomerase</keyword>
<keyword id="KW-1185">Reference proteome</keyword>
<accession>A1AEZ1</accession>
<gene>
    <name evidence="1" type="primary">fucU</name>
    <name type="ordered locus">Ecok1_27370</name>
    <name type="ORF">APECO1_3727</name>
</gene>
<reference key="1">
    <citation type="journal article" date="2007" name="J. Bacteriol.">
        <title>The genome sequence of avian pathogenic Escherichia coli strain O1:K1:H7 shares strong similarities with human extraintestinal pathogenic E. coli genomes.</title>
        <authorList>
            <person name="Johnson T.J."/>
            <person name="Kariyawasam S."/>
            <person name="Wannemuehler Y."/>
            <person name="Mangiamele P."/>
            <person name="Johnson S.J."/>
            <person name="Doetkott C."/>
            <person name="Skyberg J.A."/>
            <person name="Lynne A.M."/>
            <person name="Johnson J.R."/>
            <person name="Nolan L.K."/>
        </authorList>
    </citation>
    <scope>NUCLEOTIDE SEQUENCE [LARGE SCALE GENOMIC DNA]</scope>
</reference>
<dbReference type="EC" id="5.1.3.29" evidence="1"/>
<dbReference type="EMBL" id="CP000468">
    <property type="protein sequence ID" value="ABJ02231.1"/>
    <property type="molecule type" value="Genomic_DNA"/>
</dbReference>
<dbReference type="RefSeq" id="WP_000920840.1">
    <property type="nucleotide sequence ID" value="NZ_CADILS010000024.1"/>
</dbReference>
<dbReference type="SMR" id="A1AEZ1"/>
<dbReference type="GeneID" id="93779194"/>
<dbReference type="KEGG" id="ecv:APECO1_3727"/>
<dbReference type="HOGENOM" id="CLU_120075_1_0_6"/>
<dbReference type="UniPathway" id="UPA00956"/>
<dbReference type="Proteomes" id="UP000008216">
    <property type="component" value="Chromosome"/>
</dbReference>
<dbReference type="GO" id="GO:0005737">
    <property type="term" value="C:cytoplasm"/>
    <property type="evidence" value="ECO:0007669"/>
    <property type="project" value="UniProtKB-SubCell"/>
</dbReference>
<dbReference type="GO" id="GO:0042806">
    <property type="term" value="F:fucose binding"/>
    <property type="evidence" value="ECO:0007669"/>
    <property type="project" value="InterPro"/>
</dbReference>
<dbReference type="GO" id="GO:0036373">
    <property type="term" value="F:L-fucose mutarotase activity"/>
    <property type="evidence" value="ECO:0007669"/>
    <property type="project" value="UniProtKB-EC"/>
</dbReference>
<dbReference type="GO" id="GO:0036065">
    <property type="term" value="P:fucosylation"/>
    <property type="evidence" value="ECO:0007669"/>
    <property type="project" value="TreeGrafter"/>
</dbReference>
<dbReference type="GO" id="GO:0042354">
    <property type="term" value="P:L-fucose metabolic process"/>
    <property type="evidence" value="ECO:0007669"/>
    <property type="project" value="UniProtKB-UniRule"/>
</dbReference>
<dbReference type="FunFam" id="3.40.1650.10:FF:000001">
    <property type="entry name" value="L-fucose mutarotase"/>
    <property type="match status" value="1"/>
</dbReference>
<dbReference type="Gene3D" id="3.40.1650.10">
    <property type="entry name" value="RbsD-like domain"/>
    <property type="match status" value="1"/>
</dbReference>
<dbReference type="HAMAP" id="MF_01662">
    <property type="entry name" value="L_fucose_rotase"/>
    <property type="match status" value="1"/>
</dbReference>
<dbReference type="InterPro" id="IPR023751">
    <property type="entry name" value="L-fucose_mutarotase"/>
</dbReference>
<dbReference type="InterPro" id="IPR023750">
    <property type="entry name" value="RbsD-like_sf"/>
</dbReference>
<dbReference type="InterPro" id="IPR050443">
    <property type="entry name" value="RbsD/FucU_mutarotase"/>
</dbReference>
<dbReference type="InterPro" id="IPR007721">
    <property type="entry name" value="RbsD_FucU"/>
</dbReference>
<dbReference type="NCBIfam" id="NF011949">
    <property type="entry name" value="PRK15420.1"/>
    <property type="match status" value="1"/>
</dbReference>
<dbReference type="PANTHER" id="PTHR31690">
    <property type="entry name" value="FUCOSE MUTAROTASE"/>
    <property type="match status" value="1"/>
</dbReference>
<dbReference type="PANTHER" id="PTHR31690:SF4">
    <property type="entry name" value="FUCOSE MUTAROTASE"/>
    <property type="match status" value="1"/>
</dbReference>
<dbReference type="Pfam" id="PF05025">
    <property type="entry name" value="RbsD_FucU"/>
    <property type="match status" value="1"/>
</dbReference>
<dbReference type="SUPFAM" id="SSF102546">
    <property type="entry name" value="RbsD-like"/>
    <property type="match status" value="1"/>
</dbReference>
<sequence length="140" mass="15473">MLKTISPLISPELLKVLAEMGHGDEIIFSDAHFPAHSMGPQVIRADGLLVSDLLQAIIPLFELDSYAPPLVMMAAVEGDTLDPEVERRYRNALSLQAPCPDIIRINRFAFYERAQKAFAIVITGERAKYGNILLKKGVTP</sequence>
<feature type="chain" id="PRO_0000344543" description="L-fucose mutarotase">
    <location>
        <begin position="1"/>
        <end position="140"/>
    </location>
</feature>
<feature type="active site" description="Proton donor" evidence="1">
    <location>
        <position position="22"/>
    </location>
</feature>
<feature type="binding site" evidence="1">
    <location>
        <position position="30"/>
    </location>
    <ligand>
        <name>substrate</name>
    </ligand>
</feature>
<feature type="binding site" evidence="1">
    <location>
        <position position="107"/>
    </location>
    <ligand>
        <name>substrate</name>
    </ligand>
</feature>
<feature type="binding site" evidence="1">
    <location>
        <begin position="129"/>
        <end position="131"/>
    </location>
    <ligand>
        <name>substrate</name>
    </ligand>
</feature>
<evidence type="ECO:0000255" key="1">
    <source>
        <dbReference type="HAMAP-Rule" id="MF_01662"/>
    </source>
</evidence>
<name>FUCM_ECOK1</name>
<proteinExistence type="inferred from homology"/>